<accession>P41351</accession>
<reference key="1">
    <citation type="journal article" date="1994" name="Cell Motil. Cytoskeleton">
        <title>Regulation and evolution of the single alpha-tubulin gene of the ciliate Tetrahymena thermophila.</title>
        <authorList>
            <person name="McGrath K.E."/>
            <person name="Yu S.M."/>
            <person name="Heruth D.P."/>
            <person name="Kelly A.A."/>
            <person name="Gorovsky M.A."/>
        </authorList>
    </citation>
    <scope>NUCLEOTIDE SEQUENCE [GENOMIC DNA]</scope>
</reference>
<reference key="2">
    <citation type="journal article" date="1995" name="J. Cell Biol.">
        <title>Acetylation of lysine 40 in alpha-tubulin is not essential in Tetrahymena thermophila.</title>
        <authorList>
            <person name="Gaertig J."/>
            <person name="Cruz M.A."/>
            <person name="Bowen J."/>
            <person name="Gu L."/>
            <person name="Pennock D.G."/>
            <person name="Gorovsky M.A."/>
        </authorList>
    </citation>
    <scope>ACETYLATION AT LYS-40</scope>
</reference>
<reference key="3">
    <citation type="journal article" date="2005" name="Science">
        <title>Tubulin polyglutamylase enzymes are members of the TTL domain protein family.</title>
        <authorList>
            <person name="Janke C."/>
            <person name="Rogowski K."/>
            <person name="Wloga D."/>
            <person name="Regnard C."/>
            <person name="Kajava A.V."/>
            <person name="Strub J.-M."/>
            <person name="Temurak N."/>
            <person name="van Dijk J."/>
            <person name="Boucher D."/>
            <person name="van Dorsselaer A."/>
            <person name="Suryavanshi S."/>
            <person name="Gaertig J."/>
            <person name="Edde B."/>
        </authorList>
    </citation>
    <scope>GLUTAMYLATION</scope>
</reference>
<reference key="4">
    <citation type="journal article" date="2009" name="Dev. Cell">
        <title>TTLL3 Is a tubulin glycine ligase that regulates the assembly of cilia.</title>
        <authorList>
            <person name="Wloga D."/>
            <person name="Webster D.M."/>
            <person name="Rogowski K."/>
            <person name="Bre M.-H."/>
            <person name="Levilliers N."/>
            <person name="Jerka-Dziadosz M."/>
            <person name="Janke C."/>
            <person name="Dougan S.T."/>
            <person name="Gaertig J."/>
        </authorList>
    </citation>
    <scope>GLYCYLATION</scope>
</reference>
<reference key="5">
    <citation type="journal article" date="2010" name="Nature">
        <title>MEC-17 is an alpha-tubulin acetyltransferase.</title>
        <authorList>
            <person name="Akella J.S."/>
            <person name="Wloga D."/>
            <person name="Kim J."/>
            <person name="Starostina N.G."/>
            <person name="Lyons-Abbott S."/>
            <person name="Morrissette N.S."/>
            <person name="Dougan S.T."/>
            <person name="Kipreos E.T."/>
            <person name="Gaertig J."/>
        </authorList>
    </citation>
    <scope>ACETYLATION AT LYS-40</scope>
    <scope>MUTAGENESIS OF LYS-40</scope>
</reference>
<sequence length="449" mass="49587">MREVISIHVGQGGIQVGNACWELFCLEHGIQPDGQMPSDKTIGGGDDAFNTFFSETGAGKHVPRAVFLDLEPTVIDEVRTGTYRQLFHPEQLISGKEDAANNFARGHYTIGKEIVDLCLDRIRKLADNCTGLQGFLVFNSVGGGTGSGLGSLLLERLSVDYGKKSKLGFTIYPSPQVSTAVVEPYNSILSTHSLLEHTDVAVMLDNEAIYDICRRNLDIERPTYTNLNRLIAQVISSLTASLRFDGALNVDITEFQTNLVPYPRIHFMLSSYAPIISAEKAYHEQLSVAEITNSAFEPANMMAKCDPRHGKYMACSMMYRGDVVPKDVNASIATIKTKRTIQFVDWCPTGFKVGINYQPPTVVPGGDLAKVMRAVCMISNSTAIAEVFSRLDHKFDLMYAKRAFVHWYVGEGMEEGEFSEAREDLAALEKDYEEVGIETAEGEGEEEGY</sequence>
<proteinExistence type="evidence at protein level"/>
<dbReference type="EC" id="3.6.5.-" evidence="1"/>
<dbReference type="EMBL" id="M86723">
    <property type="protein sequence ID" value="AAA21350.1"/>
    <property type="molecule type" value="Genomic_DNA"/>
</dbReference>
<dbReference type="PDB" id="5UBQ">
    <property type="method" value="EM"/>
    <property type="resolution" value="5.70 A"/>
    <property type="chains" value="A/C/E=1-441"/>
</dbReference>
<dbReference type="PDB" id="5UCY">
    <property type="method" value="EM"/>
    <property type="resolution" value="4.60 A"/>
    <property type="chains" value="A=1-441"/>
</dbReference>
<dbReference type="PDB" id="6U0H">
    <property type="method" value="EM"/>
    <property type="resolution" value="4.30 A"/>
    <property type="chains" value="A=1-449"/>
</dbReference>
<dbReference type="PDB" id="6U0T">
    <property type="method" value="EM"/>
    <property type="resolution" value="4.16 A"/>
    <property type="chains" value="C/D/E/F/G/H=1-449"/>
</dbReference>
<dbReference type="PDB" id="6U0U">
    <property type="method" value="EM"/>
    <property type="resolution" value="4.16 A"/>
    <property type="chains" value="C/D/E/F/G/H=1-449"/>
</dbReference>
<dbReference type="PDB" id="7MOQ">
    <property type="method" value="EM"/>
    <property type="resolution" value="8.00 A"/>
    <property type="chains" value="R/S/W/r/s/w=1-449"/>
</dbReference>
<dbReference type="PDB" id="7MWG">
    <property type="method" value="EM"/>
    <property type="resolution" value="3.50 A"/>
    <property type="chains" value="A=1-449"/>
</dbReference>
<dbReference type="PDB" id="7N32">
    <property type="method" value="EM"/>
    <property type="resolution" value="4.50 A"/>
    <property type="chains" value="a/c/e/g/i/k/m/o/q/s/u/w=1-449"/>
</dbReference>
<dbReference type="PDB" id="7PJE">
    <property type="method" value="X-ray"/>
    <property type="resolution" value="1.75 A"/>
    <property type="chains" value="A/C=1-449"/>
</dbReference>
<dbReference type="PDB" id="8G2Z">
    <property type="method" value="EM"/>
    <property type="resolution" value="4.10 A"/>
    <property type="chains" value="AA/AC/AE/AG/AI/AK/AM/BA/BC/BE/BG/BI/BK/BM/CA/CC/CE/CG/CI/CK/CM/DA/DC/DE/DG/DI/DK/DM/EA/EC=1-449"/>
</dbReference>
<dbReference type="PDB" id="8G3D">
    <property type="method" value="EM"/>
    <property type="resolution" value="3.70 A"/>
    <property type="chains" value="AA/AC/AE/AG/AI/AK/AM/BA/BC/BE/BG/BI/BK/BM/CA/CC/CE/CG/CI/CK/CM/DA/DC/DE/DG/DI/DK/DM/EA/EC=1-449"/>
</dbReference>
<dbReference type="PDB" id="8SF7">
    <property type="method" value="EM"/>
    <property type="resolution" value="4.10 A"/>
    <property type="chains" value="AA/AC/AE/AG/AI/AK/AM/BA/BC/BE/BG/BI/BK/BM/CA/CC/CE/CG/CI/CK/CM/DA/DC/DE/DG/DI/DK/DM/EA/EC=1-449"/>
</dbReference>
<dbReference type="PDBsum" id="5UBQ"/>
<dbReference type="PDBsum" id="5UCY"/>
<dbReference type="PDBsum" id="6U0H"/>
<dbReference type="PDBsum" id="6U0T"/>
<dbReference type="PDBsum" id="6U0U"/>
<dbReference type="PDBsum" id="7MOQ"/>
<dbReference type="PDBsum" id="7MWG"/>
<dbReference type="PDBsum" id="7N32"/>
<dbReference type="PDBsum" id="7PJE"/>
<dbReference type="PDBsum" id="8G2Z"/>
<dbReference type="PDBsum" id="8G3D"/>
<dbReference type="PDBsum" id="8SF7"/>
<dbReference type="EMDB" id="EMD-20602"/>
<dbReference type="EMDB" id="EMD-23926"/>
<dbReference type="EMDB" id="EMD-24066"/>
<dbReference type="EMDB" id="EMD-29685"/>
<dbReference type="EMDB" id="EMD-29692"/>
<dbReference type="EMDB" id="EMD-40436"/>
<dbReference type="EMDB" id="EMD-8528"/>
<dbReference type="EMDB" id="EMD-8539"/>
<dbReference type="SMR" id="P41351"/>
<dbReference type="iPTMnet" id="P41351"/>
<dbReference type="OMA" id="YMASCIL"/>
<dbReference type="GO" id="GO:0005737">
    <property type="term" value="C:cytoplasm"/>
    <property type="evidence" value="ECO:0007669"/>
    <property type="project" value="UniProtKB-KW"/>
</dbReference>
<dbReference type="GO" id="GO:0005874">
    <property type="term" value="C:microtubule"/>
    <property type="evidence" value="ECO:0007669"/>
    <property type="project" value="UniProtKB-KW"/>
</dbReference>
<dbReference type="GO" id="GO:0005525">
    <property type="term" value="F:GTP binding"/>
    <property type="evidence" value="ECO:0007669"/>
    <property type="project" value="UniProtKB-KW"/>
</dbReference>
<dbReference type="GO" id="GO:0016787">
    <property type="term" value="F:hydrolase activity"/>
    <property type="evidence" value="ECO:0007669"/>
    <property type="project" value="UniProtKB-KW"/>
</dbReference>
<dbReference type="GO" id="GO:0046872">
    <property type="term" value="F:metal ion binding"/>
    <property type="evidence" value="ECO:0007669"/>
    <property type="project" value="UniProtKB-KW"/>
</dbReference>
<dbReference type="GO" id="GO:0005200">
    <property type="term" value="F:structural constituent of cytoskeleton"/>
    <property type="evidence" value="ECO:0007669"/>
    <property type="project" value="InterPro"/>
</dbReference>
<dbReference type="GO" id="GO:0007017">
    <property type="term" value="P:microtubule-based process"/>
    <property type="evidence" value="ECO:0007669"/>
    <property type="project" value="InterPro"/>
</dbReference>
<dbReference type="CDD" id="cd02186">
    <property type="entry name" value="alpha_tubulin"/>
    <property type="match status" value="1"/>
</dbReference>
<dbReference type="DisProt" id="DP01460"/>
<dbReference type="FunFam" id="1.10.287.600:FF:000005">
    <property type="entry name" value="Tubulin alpha chain"/>
    <property type="match status" value="1"/>
</dbReference>
<dbReference type="FunFam" id="3.30.1330.20:FF:000001">
    <property type="entry name" value="Tubulin alpha chain"/>
    <property type="match status" value="1"/>
</dbReference>
<dbReference type="FunFam" id="3.40.50.1440:FF:000004">
    <property type="entry name" value="Tubulin alpha chain"/>
    <property type="match status" value="1"/>
</dbReference>
<dbReference type="Gene3D" id="1.10.287.600">
    <property type="entry name" value="Helix hairpin bin"/>
    <property type="match status" value="1"/>
</dbReference>
<dbReference type="Gene3D" id="3.30.1330.20">
    <property type="entry name" value="Tubulin/FtsZ, C-terminal domain"/>
    <property type="match status" value="1"/>
</dbReference>
<dbReference type="Gene3D" id="3.40.50.1440">
    <property type="entry name" value="Tubulin/FtsZ, GTPase domain"/>
    <property type="match status" value="1"/>
</dbReference>
<dbReference type="InterPro" id="IPR002452">
    <property type="entry name" value="Alpha_tubulin"/>
</dbReference>
<dbReference type="InterPro" id="IPR008280">
    <property type="entry name" value="Tub_FtsZ_C"/>
</dbReference>
<dbReference type="InterPro" id="IPR000217">
    <property type="entry name" value="Tubulin"/>
</dbReference>
<dbReference type="InterPro" id="IPR037103">
    <property type="entry name" value="Tubulin/FtsZ-like_C"/>
</dbReference>
<dbReference type="InterPro" id="IPR018316">
    <property type="entry name" value="Tubulin/FtsZ_2-layer-sand-dom"/>
</dbReference>
<dbReference type="InterPro" id="IPR036525">
    <property type="entry name" value="Tubulin/FtsZ_GTPase_sf"/>
</dbReference>
<dbReference type="InterPro" id="IPR023123">
    <property type="entry name" value="Tubulin_C"/>
</dbReference>
<dbReference type="InterPro" id="IPR017975">
    <property type="entry name" value="Tubulin_CS"/>
</dbReference>
<dbReference type="InterPro" id="IPR003008">
    <property type="entry name" value="Tubulin_FtsZ_GTPase"/>
</dbReference>
<dbReference type="PANTHER" id="PTHR11588">
    <property type="entry name" value="TUBULIN"/>
    <property type="match status" value="1"/>
</dbReference>
<dbReference type="Pfam" id="PF00091">
    <property type="entry name" value="Tubulin"/>
    <property type="match status" value="1"/>
</dbReference>
<dbReference type="Pfam" id="PF03953">
    <property type="entry name" value="Tubulin_C"/>
    <property type="match status" value="1"/>
</dbReference>
<dbReference type="PRINTS" id="PR01162">
    <property type="entry name" value="ALPHATUBULIN"/>
</dbReference>
<dbReference type="PRINTS" id="PR01161">
    <property type="entry name" value="TUBULIN"/>
</dbReference>
<dbReference type="SMART" id="SM00864">
    <property type="entry name" value="Tubulin"/>
    <property type="match status" value="1"/>
</dbReference>
<dbReference type="SMART" id="SM00865">
    <property type="entry name" value="Tubulin_C"/>
    <property type="match status" value="1"/>
</dbReference>
<dbReference type="SUPFAM" id="SSF55307">
    <property type="entry name" value="Tubulin C-terminal domain-like"/>
    <property type="match status" value="1"/>
</dbReference>
<dbReference type="SUPFAM" id="SSF52490">
    <property type="entry name" value="Tubulin nucleotide-binding domain-like"/>
    <property type="match status" value="1"/>
</dbReference>
<dbReference type="PROSITE" id="PS00227">
    <property type="entry name" value="TUBULIN"/>
    <property type="match status" value="1"/>
</dbReference>
<evidence type="ECO:0000250" key="1">
    <source>
        <dbReference type="UniProtKB" id="P68363"/>
    </source>
</evidence>
<evidence type="ECO:0000250" key="2">
    <source>
        <dbReference type="UniProtKB" id="P68369"/>
    </source>
</evidence>
<evidence type="ECO:0000250" key="3">
    <source>
        <dbReference type="UniProtKB" id="Q71U36"/>
    </source>
</evidence>
<evidence type="ECO:0000269" key="4">
    <source>
    </source>
</evidence>
<evidence type="ECO:0000269" key="5">
    <source>
    </source>
</evidence>
<evidence type="ECO:0000305" key="6"/>
<evidence type="ECO:0007829" key="7">
    <source>
        <dbReference type="PDB" id="7MWG"/>
    </source>
</evidence>
<evidence type="ECO:0007829" key="8">
    <source>
        <dbReference type="PDB" id="7PJE"/>
    </source>
</evidence>
<organism>
    <name type="scientific">Tetrahymena thermophila</name>
    <dbReference type="NCBI Taxonomy" id="5911"/>
    <lineage>
        <taxon>Eukaryota</taxon>
        <taxon>Sar</taxon>
        <taxon>Alveolata</taxon>
        <taxon>Ciliophora</taxon>
        <taxon>Intramacronucleata</taxon>
        <taxon>Oligohymenophorea</taxon>
        <taxon>Hymenostomatida</taxon>
        <taxon>Tetrahymenina</taxon>
        <taxon>Tetrahymenidae</taxon>
        <taxon>Tetrahymena</taxon>
    </lineage>
</organism>
<protein>
    <recommendedName>
        <fullName>Tubulin alpha chain</fullName>
        <ecNumber evidence="1">3.6.5.-</ecNumber>
    </recommendedName>
    <alternativeName>
        <fullName>Alpha-tubulin</fullName>
    </alternativeName>
    <component>
        <recommendedName>
            <fullName>Detyrosinated tubulin alpha chain</fullName>
        </recommendedName>
    </component>
</protein>
<keyword id="KW-0002">3D-structure</keyword>
<keyword id="KW-0007">Acetylation</keyword>
<keyword id="KW-0963">Cytoplasm</keyword>
<keyword id="KW-0206">Cytoskeleton</keyword>
<keyword id="KW-0342">GTP-binding</keyword>
<keyword id="KW-0378">Hydrolase</keyword>
<keyword id="KW-0460">Magnesium</keyword>
<keyword id="KW-0479">Metal-binding</keyword>
<keyword id="KW-0493">Microtubule</keyword>
<keyword id="KW-0547">Nucleotide-binding</keyword>
<feature type="chain" id="PRO_0000048231" description="Tubulin alpha chain">
    <location>
        <begin position="1"/>
        <end position="449"/>
    </location>
</feature>
<feature type="chain" id="PRO_0000437408" description="Detyrosinated tubulin alpha chain" evidence="2 3">
    <location>
        <begin position="1"/>
        <end position="448"/>
    </location>
</feature>
<feature type="active site" evidence="1">
    <location>
        <position position="254"/>
    </location>
</feature>
<feature type="binding site" evidence="1">
    <location>
        <position position="11"/>
    </location>
    <ligand>
        <name>GTP</name>
        <dbReference type="ChEBI" id="CHEBI:37565"/>
    </ligand>
</feature>
<feature type="binding site" evidence="1">
    <location>
        <position position="71"/>
    </location>
    <ligand>
        <name>GTP</name>
        <dbReference type="ChEBI" id="CHEBI:37565"/>
    </ligand>
</feature>
<feature type="binding site" evidence="1">
    <location>
        <position position="71"/>
    </location>
    <ligand>
        <name>Mg(2+)</name>
        <dbReference type="ChEBI" id="CHEBI:18420"/>
    </ligand>
</feature>
<feature type="binding site" evidence="1">
    <location>
        <position position="140"/>
    </location>
    <ligand>
        <name>GTP</name>
        <dbReference type="ChEBI" id="CHEBI:37565"/>
    </ligand>
</feature>
<feature type="binding site" evidence="1">
    <location>
        <position position="144"/>
    </location>
    <ligand>
        <name>GTP</name>
        <dbReference type="ChEBI" id="CHEBI:37565"/>
    </ligand>
</feature>
<feature type="binding site" evidence="1">
    <location>
        <position position="145"/>
    </location>
    <ligand>
        <name>GTP</name>
        <dbReference type="ChEBI" id="CHEBI:37565"/>
    </ligand>
</feature>
<feature type="binding site" evidence="1">
    <location>
        <position position="179"/>
    </location>
    <ligand>
        <name>GTP</name>
        <dbReference type="ChEBI" id="CHEBI:37565"/>
    </ligand>
</feature>
<feature type="binding site" evidence="1">
    <location>
        <position position="206"/>
    </location>
    <ligand>
        <name>GTP</name>
        <dbReference type="ChEBI" id="CHEBI:37565"/>
    </ligand>
</feature>
<feature type="binding site" evidence="1">
    <location>
        <position position="228"/>
    </location>
    <ligand>
        <name>GTP</name>
        <dbReference type="ChEBI" id="CHEBI:37565"/>
    </ligand>
</feature>
<feature type="site" description="Involved in polymerization">
    <location>
        <position position="449"/>
    </location>
</feature>
<feature type="modified residue" description="N6-acetyllysine" evidence="4 5">
    <location>
        <position position="40"/>
    </location>
</feature>
<feature type="mutagenesis site" description="Produces faster growing cells in medium with paclitaxel, a microtubule-stabilizing drug." evidence="4">
    <original>K</original>
    <variation>R</variation>
    <location>
        <position position="40"/>
    </location>
</feature>
<feature type="strand" evidence="8">
    <location>
        <begin position="4"/>
        <end position="9"/>
    </location>
</feature>
<feature type="helix" evidence="8">
    <location>
        <begin position="10"/>
        <end position="28"/>
    </location>
</feature>
<feature type="helix" evidence="8">
    <location>
        <begin position="49"/>
        <end position="51"/>
    </location>
</feature>
<feature type="strand" evidence="8">
    <location>
        <begin position="53"/>
        <end position="55"/>
    </location>
</feature>
<feature type="strand" evidence="7">
    <location>
        <begin position="57"/>
        <end position="59"/>
    </location>
</feature>
<feature type="strand" evidence="8">
    <location>
        <begin position="61"/>
        <end position="72"/>
    </location>
</feature>
<feature type="helix" evidence="8">
    <location>
        <begin position="73"/>
        <end position="80"/>
    </location>
</feature>
<feature type="turn" evidence="8">
    <location>
        <begin position="82"/>
        <end position="86"/>
    </location>
</feature>
<feature type="helix" evidence="8">
    <location>
        <begin position="89"/>
        <end position="91"/>
    </location>
</feature>
<feature type="strand" evidence="8">
    <location>
        <begin position="92"/>
        <end position="94"/>
    </location>
</feature>
<feature type="helix" evidence="8">
    <location>
        <begin position="103"/>
        <end position="107"/>
    </location>
</feature>
<feature type="turn" evidence="8">
    <location>
        <begin position="108"/>
        <end position="110"/>
    </location>
</feature>
<feature type="helix" evidence="8">
    <location>
        <begin position="111"/>
        <end position="113"/>
    </location>
</feature>
<feature type="helix" evidence="8">
    <location>
        <begin position="115"/>
        <end position="126"/>
    </location>
</feature>
<feature type="strand" evidence="8">
    <location>
        <begin position="134"/>
        <end position="144"/>
    </location>
</feature>
<feature type="helix" evidence="8">
    <location>
        <begin position="145"/>
        <end position="160"/>
    </location>
</feature>
<feature type="turn" evidence="8">
    <location>
        <begin position="161"/>
        <end position="163"/>
    </location>
</feature>
<feature type="strand" evidence="8">
    <location>
        <begin position="165"/>
        <end position="172"/>
    </location>
</feature>
<feature type="helix" evidence="8">
    <location>
        <begin position="175"/>
        <end position="177"/>
    </location>
</feature>
<feature type="helix" evidence="8">
    <location>
        <begin position="183"/>
        <end position="197"/>
    </location>
</feature>
<feature type="strand" evidence="8">
    <location>
        <begin position="199"/>
        <end position="205"/>
    </location>
</feature>
<feature type="helix" evidence="8">
    <location>
        <begin position="206"/>
        <end position="215"/>
    </location>
</feature>
<feature type="helix" evidence="8">
    <location>
        <begin position="224"/>
        <end position="243"/>
    </location>
</feature>
<feature type="strand" evidence="8">
    <location>
        <begin position="247"/>
        <end position="249"/>
    </location>
</feature>
<feature type="helix" evidence="8">
    <location>
        <begin position="252"/>
        <end position="259"/>
    </location>
</feature>
<feature type="strand" evidence="7">
    <location>
        <begin position="262"/>
        <end position="264"/>
    </location>
</feature>
<feature type="strand" evidence="8">
    <location>
        <begin position="267"/>
        <end position="273"/>
    </location>
</feature>
<feature type="turn" evidence="7">
    <location>
        <begin position="278"/>
        <end position="280"/>
    </location>
</feature>
<feature type="helix" evidence="7">
    <location>
        <begin position="281"/>
        <end position="283"/>
    </location>
</feature>
<feature type="helix" evidence="8">
    <location>
        <begin position="288"/>
        <end position="294"/>
    </location>
</feature>
<feature type="helix" evidence="8">
    <location>
        <begin position="298"/>
        <end position="300"/>
    </location>
</feature>
<feature type="strand" evidence="8">
    <location>
        <begin position="301"/>
        <end position="305"/>
    </location>
</feature>
<feature type="helix" evidence="7">
    <location>
        <begin position="307"/>
        <end position="309"/>
    </location>
</feature>
<feature type="strand" evidence="8">
    <location>
        <begin position="312"/>
        <end position="322"/>
    </location>
</feature>
<feature type="helix" evidence="8">
    <location>
        <begin position="325"/>
        <end position="338"/>
    </location>
</feature>
<feature type="strand" evidence="7">
    <location>
        <begin position="339"/>
        <end position="341"/>
    </location>
</feature>
<feature type="strand" evidence="8">
    <location>
        <begin position="351"/>
        <end position="356"/>
    </location>
</feature>
<feature type="strand" evidence="8">
    <location>
        <begin position="372"/>
        <end position="381"/>
    </location>
</feature>
<feature type="helix" evidence="8">
    <location>
        <begin position="382"/>
        <end position="384"/>
    </location>
</feature>
<feature type="helix" evidence="8">
    <location>
        <begin position="385"/>
        <end position="399"/>
    </location>
</feature>
<feature type="turn" evidence="8">
    <location>
        <begin position="400"/>
        <end position="404"/>
    </location>
</feature>
<feature type="helix" evidence="8">
    <location>
        <begin position="405"/>
        <end position="409"/>
    </location>
</feature>
<feature type="turn" evidence="8">
    <location>
        <begin position="410"/>
        <end position="412"/>
    </location>
</feature>
<feature type="helix" evidence="8">
    <location>
        <begin position="416"/>
        <end position="435"/>
    </location>
</feature>
<name>TBA_TETTH</name>
<comment type="function">
    <text>Tubulin is the major constituent of microtubules, a cylinder consisting of laterally associated linear protofilaments composed of alpha- and beta-tubulin heterodimers. Microtubules grow by the addition of GTP-tubulin dimers to the microtubule end, where a stabilizing cap forms. Below the cap, tubulin dimers are in GDP-bound state, owing to GTPase activity of alpha-tubulin.</text>
</comment>
<comment type="catalytic activity">
    <reaction evidence="1">
        <text>GTP + H2O = GDP + phosphate + H(+)</text>
        <dbReference type="Rhea" id="RHEA:19669"/>
        <dbReference type="ChEBI" id="CHEBI:15377"/>
        <dbReference type="ChEBI" id="CHEBI:15378"/>
        <dbReference type="ChEBI" id="CHEBI:37565"/>
        <dbReference type="ChEBI" id="CHEBI:43474"/>
        <dbReference type="ChEBI" id="CHEBI:58189"/>
    </reaction>
    <physiologicalReaction direction="left-to-right" evidence="1">
        <dbReference type="Rhea" id="RHEA:19670"/>
    </physiologicalReaction>
</comment>
<comment type="cofactor">
    <cofactor evidence="1">
        <name>Mg(2+)</name>
        <dbReference type="ChEBI" id="CHEBI:18420"/>
    </cofactor>
</comment>
<comment type="subunit">
    <text>Dimer of alpha and beta chains. A typical microtubule is a hollow water-filled tube with an outer diameter of 25 nm and an inner diameter of 15 nM. Alpha-beta heterodimers associate head-to-tail to form protofilaments running lengthwise along the microtubule wall with the beta-tubulin subunit facing the microtubule plus end conferring a structural polarity. Microtubules usually have 13 protofilaments but different protofilament numbers can be found in some organisms and specialized cells.</text>
</comment>
<comment type="subcellular location">
    <subcellularLocation>
        <location>Cytoplasm</location>
        <location>Cytoskeleton</location>
    </subcellularLocation>
</comment>
<comment type="PTM">
    <text evidence="2 3">Undergoes a tyrosination/detyrosination cycle, the cyclic removal and re-addition of a C-terminal tyrosine residue by the enzymes tubulin tyrosine carboxypeptidase (TTCP) and tubulin tyrosine ligase (TTL), respectively.</text>
</comment>
<comment type="PTM">
    <text>Some glutamate residues at the C-terminus are either polyglutamylated or polyglycylated. These 2 modifications occur exclusively on glutamate residues and result in either polyglutamate or polyglycine chains on the gamma-carboxyl group. Both modifications can coexist on the same protein on adjacent residues, and lowering polyglycylation levels increases polyglutamylation, and reciprocally. The precise function of such modifications is still unclear but they regulate the assembly and dynamics of axonemal microtubules.</text>
</comment>
<comment type="PTM">
    <text evidence="4 5">Acetylation of alpha chains at Lys-40 stabilizes microtubules and affects affinity and processivity of microtubule motors. This modification has a role in multiple cellular functions, ranging from cell motility, cell cycle progression or cell differentiation to intracellular trafficking and signaling.</text>
</comment>
<comment type="similarity">
    <text evidence="6">Belongs to the tubulin family.</text>
</comment>